<gene>
    <name evidence="1" type="primary">hisC</name>
    <name type="ordered locus">SNSL254_A2252</name>
</gene>
<feature type="chain" id="PRO_1000135421" description="Histidinol-phosphate aminotransferase">
    <location>
        <begin position="1"/>
        <end position="359"/>
    </location>
</feature>
<feature type="modified residue" description="N6-(pyridoxal phosphate)lysine" evidence="1">
    <location>
        <position position="217"/>
    </location>
</feature>
<dbReference type="EC" id="2.6.1.9" evidence="1"/>
<dbReference type="EMBL" id="CP001113">
    <property type="protein sequence ID" value="ACF63711.1"/>
    <property type="molecule type" value="Genomic_DNA"/>
</dbReference>
<dbReference type="RefSeq" id="WP_000102710.1">
    <property type="nucleotide sequence ID" value="NZ_CCMR01000002.1"/>
</dbReference>
<dbReference type="SMR" id="B4SX42"/>
<dbReference type="KEGG" id="see:SNSL254_A2252"/>
<dbReference type="HOGENOM" id="CLU_017584_3_1_6"/>
<dbReference type="UniPathway" id="UPA00031">
    <property type="reaction ID" value="UER00012"/>
</dbReference>
<dbReference type="Proteomes" id="UP000008824">
    <property type="component" value="Chromosome"/>
</dbReference>
<dbReference type="GO" id="GO:0004400">
    <property type="term" value="F:histidinol-phosphate transaminase activity"/>
    <property type="evidence" value="ECO:0007669"/>
    <property type="project" value="UniProtKB-UniRule"/>
</dbReference>
<dbReference type="GO" id="GO:0030170">
    <property type="term" value="F:pyridoxal phosphate binding"/>
    <property type="evidence" value="ECO:0007669"/>
    <property type="project" value="InterPro"/>
</dbReference>
<dbReference type="GO" id="GO:0000105">
    <property type="term" value="P:L-histidine biosynthetic process"/>
    <property type="evidence" value="ECO:0007669"/>
    <property type="project" value="UniProtKB-UniRule"/>
</dbReference>
<dbReference type="CDD" id="cd00609">
    <property type="entry name" value="AAT_like"/>
    <property type="match status" value="1"/>
</dbReference>
<dbReference type="FunFam" id="3.40.640.10:FF:000032">
    <property type="entry name" value="Histidinol-phosphate aminotransferase"/>
    <property type="match status" value="1"/>
</dbReference>
<dbReference type="Gene3D" id="3.90.1150.10">
    <property type="entry name" value="Aspartate Aminotransferase, domain 1"/>
    <property type="match status" value="1"/>
</dbReference>
<dbReference type="Gene3D" id="3.40.640.10">
    <property type="entry name" value="Type I PLP-dependent aspartate aminotransferase-like (Major domain)"/>
    <property type="match status" value="1"/>
</dbReference>
<dbReference type="HAMAP" id="MF_01023">
    <property type="entry name" value="HisC_aminotrans_2"/>
    <property type="match status" value="1"/>
</dbReference>
<dbReference type="InterPro" id="IPR001917">
    <property type="entry name" value="Aminotrans_II_pyridoxalP_BS"/>
</dbReference>
<dbReference type="InterPro" id="IPR004839">
    <property type="entry name" value="Aminotransferase_I/II_large"/>
</dbReference>
<dbReference type="InterPro" id="IPR005861">
    <property type="entry name" value="HisP_aminotrans"/>
</dbReference>
<dbReference type="InterPro" id="IPR015424">
    <property type="entry name" value="PyrdxlP-dep_Trfase"/>
</dbReference>
<dbReference type="InterPro" id="IPR015421">
    <property type="entry name" value="PyrdxlP-dep_Trfase_major"/>
</dbReference>
<dbReference type="InterPro" id="IPR015422">
    <property type="entry name" value="PyrdxlP-dep_Trfase_small"/>
</dbReference>
<dbReference type="NCBIfam" id="TIGR01141">
    <property type="entry name" value="hisC"/>
    <property type="match status" value="1"/>
</dbReference>
<dbReference type="PANTHER" id="PTHR42885:SF2">
    <property type="entry name" value="HISTIDINOL-PHOSPHATE AMINOTRANSFERASE"/>
    <property type="match status" value="1"/>
</dbReference>
<dbReference type="PANTHER" id="PTHR42885">
    <property type="entry name" value="HISTIDINOL-PHOSPHATE AMINOTRANSFERASE-RELATED"/>
    <property type="match status" value="1"/>
</dbReference>
<dbReference type="Pfam" id="PF00155">
    <property type="entry name" value="Aminotran_1_2"/>
    <property type="match status" value="1"/>
</dbReference>
<dbReference type="SUPFAM" id="SSF53383">
    <property type="entry name" value="PLP-dependent transferases"/>
    <property type="match status" value="1"/>
</dbReference>
<dbReference type="PROSITE" id="PS00599">
    <property type="entry name" value="AA_TRANSFER_CLASS_2"/>
    <property type="match status" value="1"/>
</dbReference>
<proteinExistence type="inferred from homology"/>
<sequence>MSTENTLSVADLARENVRNLVPYQSARRLGGNGDVWLNANEFPTAVEFQLTQQTLNRYPECQPKAVIENYAQYAGVKPEQVLVSRGADEGIELVIRAFCEPGKDAILYCPPTYGMYSVSAETIGVERRTVPALENWQLDLQGISDNLDGAKVVFVCSPNNPTGQLINPQDLRTLLELTRGKAIVVADEAYIEFCPQATLTGWLVEYPHLVILRTLSKAFALAGLRCGFTLANEEVINLLLKVIAPYPLSTPVADIAAQALSPQGINAMRDRVAQTVQERQYLVNALQQTACVEHVFDSETNYILARFTASSSVFKSLWDQGIILRDQNKQPSLSGCLRITVGTRQENQRVIDALRAEPV</sequence>
<reference key="1">
    <citation type="journal article" date="2011" name="J. Bacteriol.">
        <title>Comparative genomics of 28 Salmonella enterica isolates: evidence for CRISPR-mediated adaptive sublineage evolution.</title>
        <authorList>
            <person name="Fricke W.F."/>
            <person name="Mammel M.K."/>
            <person name="McDermott P.F."/>
            <person name="Tartera C."/>
            <person name="White D.G."/>
            <person name="Leclerc J.E."/>
            <person name="Ravel J."/>
            <person name="Cebula T.A."/>
        </authorList>
    </citation>
    <scope>NUCLEOTIDE SEQUENCE [LARGE SCALE GENOMIC DNA]</scope>
    <source>
        <strain>SL254</strain>
    </source>
</reference>
<evidence type="ECO:0000255" key="1">
    <source>
        <dbReference type="HAMAP-Rule" id="MF_01023"/>
    </source>
</evidence>
<comment type="catalytic activity">
    <reaction evidence="1">
        <text>L-histidinol phosphate + 2-oxoglutarate = 3-(imidazol-4-yl)-2-oxopropyl phosphate + L-glutamate</text>
        <dbReference type="Rhea" id="RHEA:23744"/>
        <dbReference type="ChEBI" id="CHEBI:16810"/>
        <dbReference type="ChEBI" id="CHEBI:29985"/>
        <dbReference type="ChEBI" id="CHEBI:57766"/>
        <dbReference type="ChEBI" id="CHEBI:57980"/>
        <dbReference type="EC" id="2.6.1.9"/>
    </reaction>
</comment>
<comment type="cofactor">
    <cofactor evidence="1">
        <name>pyridoxal 5'-phosphate</name>
        <dbReference type="ChEBI" id="CHEBI:597326"/>
    </cofactor>
</comment>
<comment type="pathway">
    <text evidence="1">Amino-acid biosynthesis; L-histidine biosynthesis; L-histidine from 5-phospho-alpha-D-ribose 1-diphosphate: step 7/9.</text>
</comment>
<comment type="subunit">
    <text evidence="1">Homodimer.</text>
</comment>
<comment type="similarity">
    <text evidence="1">Belongs to the class-II pyridoxal-phosphate-dependent aminotransferase family. Histidinol-phosphate aminotransferase subfamily.</text>
</comment>
<organism>
    <name type="scientific">Salmonella newport (strain SL254)</name>
    <dbReference type="NCBI Taxonomy" id="423368"/>
    <lineage>
        <taxon>Bacteria</taxon>
        <taxon>Pseudomonadati</taxon>
        <taxon>Pseudomonadota</taxon>
        <taxon>Gammaproteobacteria</taxon>
        <taxon>Enterobacterales</taxon>
        <taxon>Enterobacteriaceae</taxon>
        <taxon>Salmonella</taxon>
    </lineage>
</organism>
<protein>
    <recommendedName>
        <fullName evidence="1">Histidinol-phosphate aminotransferase</fullName>
        <ecNumber evidence="1">2.6.1.9</ecNumber>
    </recommendedName>
    <alternativeName>
        <fullName evidence="1">Imidazole acetol-phosphate transaminase</fullName>
    </alternativeName>
</protein>
<accession>B4SX42</accession>
<name>HIS8_SALNS</name>
<keyword id="KW-0028">Amino-acid biosynthesis</keyword>
<keyword id="KW-0032">Aminotransferase</keyword>
<keyword id="KW-0368">Histidine biosynthesis</keyword>
<keyword id="KW-0663">Pyridoxal phosphate</keyword>
<keyword id="KW-0808">Transferase</keyword>